<protein>
    <recommendedName>
        <fullName evidence="1">UPF0342 protein SAUSA300_1795</fullName>
    </recommendedName>
</protein>
<gene>
    <name type="ordered locus">SAUSA300_1795</name>
</gene>
<sequence>MAVNLYDYANQLEQALRESEEYKAIKEAFANVKANEESKKLFDEFRETQINFQQKQMQGEEIAEEDLQKAQEQAQAIEKDENISALMNAEQKMSQVFQEINQIIVKPLDEIYAD</sequence>
<organism>
    <name type="scientific">Staphylococcus aureus (strain USA300)</name>
    <dbReference type="NCBI Taxonomy" id="367830"/>
    <lineage>
        <taxon>Bacteria</taxon>
        <taxon>Bacillati</taxon>
        <taxon>Bacillota</taxon>
        <taxon>Bacilli</taxon>
        <taxon>Bacillales</taxon>
        <taxon>Staphylococcaceae</taxon>
        <taxon>Staphylococcus</taxon>
    </lineage>
</organism>
<reference key="1">
    <citation type="journal article" date="2006" name="Lancet">
        <title>Complete genome sequence of USA300, an epidemic clone of community-acquired meticillin-resistant Staphylococcus aureus.</title>
        <authorList>
            <person name="Diep B.A."/>
            <person name="Gill S.R."/>
            <person name="Chang R.F."/>
            <person name="Phan T.H."/>
            <person name="Chen J.H."/>
            <person name="Davidson M.G."/>
            <person name="Lin F."/>
            <person name="Lin J."/>
            <person name="Carleton H.A."/>
            <person name="Mongodin E.F."/>
            <person name="Sensabaugh G.F."/>
            <person name="Perdreau-Remington F."/>
        </authorList>
    </citation>
    <scope>NUCLEOTIDE SEQUENCE [LARGE SCALE GENOMIC DNA]</scope>
    <source>
        <strain>USA300</strain>
    </source>
</reference>
<proteinExistence type="inferred from homology"/>
<accession>Q2FFQ0</accession>
<feature type="chain" id="PRO_0000292742" description="UPF0342 protein SAUSA300_1795">
    <location>
        <begin position="1"/>
        <end position="114"/>
    </location>
</feature>
<dbReference type="EMBL" id="CP000255">
    <property type="protein sequence ID" value="ABD21907.1"/>
    <property type="molecule type" value="Genomic_DNA"/>
</dbReference>
<dbReference type="RefSeq" id="WP_000290301.1">
    <property type="nucleotide sequence ID" value="NZ_CP027476.1"/>
</dbReference>
<dbReference type="SMR" id="Q2FFQ0"/>
<dbReference type="KEGG" id="saa:SAUSA300_1795"/>
<dbReference type="HOGENOM" id="CLU_140243_3_0_9"/>
<dbReference type="OMA" id="YDNANEM"/>
<dbReference type="Proteomes" id="UP000001939">
    <property type="component" value="Chromosome"/>
</dbReference>
<dbReference type="Gene3D" id="1.20.1500.10">
    <property type="entry name" value="YheA/YmcA-like"/>
    <property type="match status" value="1"/>
</dbReference>
<dbReference type="HAMAP" id="MF_01526">
    <property type="entry name" value="UPF0342"/>
    <property type="match status" value="1"/>
</dbReference>
<dbReference type="InterPro" id="IPR010368">
    <property type="entry name" value="Com_YlbF"/>
</dbReference>
<dbReference type="InterPro" id="IPR023378">
    <property type="entry name" value="YheA/YmcA-like_dom_sf"/>
</dbReference>
<dbReference type="NCBIfam" id="NF010212">
    <property type="entry name" value="PRK13676.1-5"/>
    <property type="match status" value="1"/>
</dbReference>
<dbReference type="Pfam" id="PF06133">
    <property type="entry name" value="Com_YlbF"/>
    <property type="match status" value="1"/>
</dbReference>
<dbReference type="SUPFAM" id="SSF158622">
    <property type="entry name" value="YheA/YmcA-like"/>
    <property type="match status" value="1"/>
</dbReference>
<comment type="similarity">
    <text evidence="1">Belongs to the UPF0342 family.</text>
</comment>
<evidence type="ECO:0000255" key="1">
    <source>
        <dbReference type="HAMAP-Rule" id="MF_01526"/>
    </source>
</evidence>
<name>Y1795_STAA3</name>